<dbReference type="EMBL" id="CP000463">
    <property type="protein sequence ID" value="ABJ04134.1"/>
    <property type="molecule type" value="Genomic_DNA"/>
</dbReference>
<dbReference type="SMR" id="Q07VA0"/>
<dbReference type="STRING" id="316055.RPE_0174"/>
<dbReference type="KEGG" id="rpe:RPE_0174"/>
<dbReference type="eggNOG" id="COG0333">
    <property type="taxonomic scope" value="Bacteria"/>
</dbReference>
<dbReference type="HOGENOM" id="CLU_129084_2_2_5"/>
<dbReference type="OrthoDB" id="9801927at2"/>
<dbReference type="GO" id="GO:0015934">
    <property type="term" value="C:large ribosomal subunit"/>
    <property type="evidence" value="ECO:0007669"/>
    <property type="project" value="InterPro"/>
</dbReference>
<dbReference type="GO" id="GO:0003735">
    <property type="term" value="F:structural constituent of ribosome"/>
    <property type="evidence" value="ECO:0007669"/>
    <property type="project" value="InterPro"/>
</dbReference>
<dbReference type="GO" id="GO:0006412">
    <property type="term" value="P:translation"/>
    <property type="evidence" value="ECO:0007669"/>
    <property type="project" value="UniProtKB-UniRule"/>
</dbReference>
<dbReference type="Gene3D" id="1.20.5.640">
    <property type="entry name" value="Single helix bin"/>
    <property type="match status" value="1"/>
</dbReference>
<dbReference type="HAMAP" id="MF_00340">
    <property type="entry name" value="Ribosomal_bL32"/>
    <property type="match status" value="1"/>
</dbReference>
<dbReference type="InterPro" id="IPR002677">
    <property type="entry name" value="Ribosomal_bL32"/>
</dbReference>
<dbReference type="InterPro" id="IPR044957">
    <property type="entry name" value="Ribosomal_bL32_bact"/>
</dbReference>
<dbReference type="InterPro" id="IPR011332">
    <property type="entry name" value="Ribosomal_zn-bd"/>
</dbReference>
<dbReference type="NCBIfam" id="TIGR01031">
    <property type="entry name" value="rpmF_bact"/>
    <property type="match status" value="1"/>
</dbReference>
<dbReference type="PANTHER" id="PTHR35534">
    <property type="entry name" value="50S RIBOSOMAL PROTEIN L32"/>
    <property type="match status" value="1"/>
</dbReference>
<dbReference type="PANTHER" id="PTHR35534:SF1">
    <property type="entry name" value="LARGE RIBOSOMAL SUBUNIT PROTEIN BL32"/>
    <property type="match status" value="1"/>
</dbReference>
<dbReference type="Pfam" id="PF01783">
    <property type="entry name" value="Ribosomal_L32p"/>
    <property type="match status" value="1"/>
</dbReference>
<dbReference type="SUPFAM" id="SSF57829">
    <property type="entry name" value="Zn-binding ribosomal proteins"/>
    <property type="match status" value="1"/>
</dbReference>
<evidence type="ECO:0000255" key="1">
    <source>
        <dbReference type="HAMAP-Rule" id="MF_00340"/>
    </source>
</evidence>
<evidence type="ECO:0000256" key="2">
    <source>
        <dbReference type="SAM" id="MobiDB-lite"/>
    </source>
</evidence>
<evidence type="ECO:0000305" key="3"/>
<protein>
    <recommendedName>
        <fullName evidence="1">Large ribosomal subunit protein bL32</fullName>
    </recommendedName>
    <alternativeName>
        <fullName evidence="3">50S ribosomal protein L32</fullName>
    </alternativeName>
</protein>
<keyword id="KW-0687">Ribonucleoprotein</keyword>
<keyword id="KW-0689">Ribosomal protein</keyword>
<organism>
    <name type="scientific">Rhodopseudomonas palustris (strain BisA53)</name>
    <dbReference type="NCBI Taxonomy" id="316055"/>
    <lineage>
        <taxon>Bacteria</taxon>
        <taxon>Pseudomonadati</taxon>
        <taxon>Pseudomonadota</taxon>
        <taxon>Alphaproteobacteria</taxon>
        <taxon>Hyphomicrobiales</taxon>
        <taxon>Nitrobacteraceae</taxon>
        <taxon>Rhodopseudomonas</taxon>
    </lineage>
</organism>
<accession>Q07VA0</accession>
<proteinExistence type="inferred from homology"/>
<reference key="1">
    <citation type="submission" date="2006-09" db="EMBL/GenBank/DDBJ databases">
        <title>Complete sequence of Rhodopseudomonas palustris BisA53.</title>
        <authorList>
            <consortium name="US DOE Joint Genome Institute"/>
            <person name="Copeland A."/>
            <person name="Lucas S."/>
            <person name="Lapidus A."/>
            <person name="Barry K."/>
            <person name="Detter J.C."/>
            <person name="Glavina del Rio T."/>
            <person name="Hammon N."/>
            <person name="Israni S."/>
            <person name="Dalin E."/>
            <person name="Tice H."/>
            <person name="Pitluck S."/>
            <person name="Chain P."/>
            <person name="Malfatti S."/>
            <person name="Shin M."/>
            <person name="Vergez L."/>
            <person name="Schmutz J."/>
            <person name="Larimer F."/>
            <person name="Land M."/>
            <person name="Hauser L."/>
            <person name="Pelletier D.A."/>
            <person name="Kyrpides N."/>
            <person name="Kim E."/>
            <person name="Harwood C.S."/>
            <person name="Oda Y."/>
            <person name="Richardson P."/>
        </authorList>
    </citation>
    <scope>NUCLEOTIDE SEQUENCE [LARGE SCALE GENOMIC DNA]</scope>
    <source>
        <strain>BisA53</strain>
    </source>
</reference>
<gene>
    <name evidence="1" type="primary">rpmF</name>
    <name type="ordered locus">RPE_0174</name>
</gene>
<sequence length="60" mass="6936">MAVPRRKTSPSRRGMRRSADAIKKPTYAEDKDSGELRRPHHLDLKTGMYKGRQVLIKKES</sequence>
<name>RL32_RHOP5</name>
<feature type="chain" id="PRO_0000296546" description="Large ribosomal subunit protein bL32">
    <location>
        <begin position="1"/>
        <end position="60"/>
    </location>
</feature>
<feature type="region of interest" description="Disordered" evidence="2">
    <location>
        <begin position="1"/>
        <end position="60"/>
    </location>
</feature>
<feature type="compositionally biased region" description="Basic residues" evidence="2">
    <location>
        <begin position="1"/>
        <end position="16"/>
    </location>
</feature>
<feature type="compositionally biased region" description="Basic and acidic residues" evidence="2">
    <location>
        <begin position="17"/>
        <end position="44"/>
    </location>
</feature>
<comment type="similarity">
    <text evidence="1">Belongs to the bacterial ribosomal protein bL32 family.</text>
</comment>